<reference key="1">
    <citation type="journal article" date="2000" name="J. Biol. Chem.">
        <title>Cloning and characterization of a new member of the Nudix hydrolases from human and mouse.</title>
        <authorList>
            <person name="Yang H."/>
            <person name="Slupska M.M."/>
            <person name="Wei Y.-F."/>
            <person name="Tai J.H."/>
            <person name="Luther W.M."/>
            <person name="Xia Y.-R."/>
            <person name="Shih D.M."/>
            <person name="Chiang J.-H."/>
            <person name="Baikalov C."/>
            <person name="Fitz-Gibbon S."/>
            <person name="Phan I.T."/>
            <person name="Conrad A."/>
            <person name="Miller J.H."/>
        </authorList>
    </citation>
    <scope>NUCLEOTIDE SEQUENCE [MRNA]</scope>
    <scope>FUNCTION</scope>
    <scope>TISSUE SPECIFICITY</scope>
</reference>
<reference key="2">
    <citation type="journal article" date="2005" name="Science">
        <title>The transcriptional landscape of the mammalian genome.</title>
        <authorList>
            <person name="Carninci P."/>
            <person name="Kasukawa T."/>
            <person name="Katayama S."/>
            <person name="Gough J."/>
            <person name="Frith M.C."/>
            <person name="Maeda N."/>
            <person name="Oyama R."/>
            <person name="Ravasi T."/>
            <person name="Lenhard B."/>
            <person name="Wells C."/>
            <person name="Kodzius R."/>
            <person name="Shimokawa K."/>
            <person name="Bajic V.B."/>
            <person name="Brenner S.E."/>
            <person name="Batalov S."/>
            <person name="Forrest A.R."/>
            <person name="Zavolan M."/>
            <person name="Davis M.J."/>
            <person name="Wilming L.G."/>
            <person name="Aidinis V."/>
            <person name="Allen J.E."/>
            <person name="Ambesi-Impiombato A."/>
            <person name="Apweiler R."/>
            <person name="Aturaliya R.N."/>
            <person name="Bailey T.L."/>
            <person name="Bansal M."/>
            <person name="Baxter L."/>
            <person name="Beisel K.W."/>
            <person name="Bersano T."/>
            <person name="Bono H."/>
            <person name="Chalk A.M."/>
            <person name="Chiu K.P."/>
            <person name="Choudhary V."/>
            <person name="Christoffels A."/>
            <person name="Clutterbuck D.R."/>
            <person name="Crowe M.L."/>
            <person name="Dalla E."/>
            <person name="Dalrymple B.P."/>
            <person name="de Bono B."/>
            <person name="Della Gatta G."/>
            <person name="di Bernardo D."/>
            <person name="Down T."/>
            <person name="Engstrom P."/>
            <person name="Fagiolini M."/>
            <person name="Faulkner G."/>
            <person name="Fletcher C.F."/>
            <person name="Fukushima T."/>
            <person name="Furuno M."/>
            <person name="Futaki S."/>
            <person name="Gariboldi M."/>
            <person name="Georgii-Hemming P."/>
            <person name="Gingeras T.R."/>
            <person name="Gojobori T."/>
            <person name="Green R.E."/>
            <person name="Gustincich S."/>
            <person name="Harbers M."/>
            <person name="Hayashi Y."/>
            <person name="Hensch T.K."/>
            <person name="Hirokawa N."/>
            <person name="Hill D."/>
            <person name="Huminiecki L."/>
            <person name="Iacono M."/>
            <person name="Ikeo K."/>
            <person name="Iwama A."/>
            <person name="Ishikawa T."/>
            <person name="Jakt M."/>
            <person name="Kanapin A."/>
            <person name="Katoh M."/>
            <person name="Kawasawa Y."/>
            <person name="Kelso J."/>
            <person name="Kitamura H."/>
            <person name="Kitano H."/>
            <person name="Kollias G."/>
            <person name="Krishnan S.P."/>
            <person name="Kruger A."/>
            <person name="Kummerfeld S.K."/>
            <person name="Kurochkin I.V."/>
            <person name="Lareau L.F."/>
            <person name="Lazarevic D."/>
            <person name="Lipovich L."/>
            <person name="Liu J."/>
            <person name="Liuni S."/>
            <person name="McWilliam S."/>
            <person name="Madan Babu M."/>
            <person name="Madera M."/>
            <person name="Marchionni L."/>
            <person name="Matsuda H."/>
            <person name="Matsuzawa S."/>
            <person name="Miki H."/>
            <person name="Mignone F."/>
            <person name="Miyake S."/>
            <person name="Morris K."/>
            <person name="Mottagui-Tabar S."/>
            <person name="Mulder N."/>
            <person name="Nakano N."/>
            <person name="Nakauchi H."/>
            <person name="Ng P."/>
            <person name="Nilsson R."/>
            <person name="Nishiguchi S."/>
            <person name="Nishikawa S."/>
            <person name="Nori F."/>
            <person name="Ohara O."/>
            <person name="Okazaki Y."/>
            <person name="Orlando V."/>
            <person name="Pang K.C."/>
            <person name="Pavan W.J."/>
            <person name="Pavesi G."/>
            <person name="Pesole G."/>
            <person name="Petrovsky N."/>
            <person name="Piazza S."/>
            <person name="Reed J."/>
            <person name="Reid J.F."/>
            <person name="Ring B.Z."/>
            <person name="Ringwald M."/>
            <person name="Rost B."/>
            <person name="Ruan Y."/>
            <person name="Salzberg S.L."/>
            <person name="Sandelin A."/>
            <person name="Schneider C."/>
            <person name="Schoenbach C."/>
            <person name="Sekiguchi K."/>
            <person name="Semple C.A."/>
            <person name="Seno S."/>
            <person name="Sessa L."/>
            <person name="Sheng Y."/>
            <person name="Shibata Y."/>
            <person name="Shimada H."/>
            <person name="Shimada K."/>
            <person name="Silva D."/>
            <person name="Sinclair B."/>
            <person name="Sperling S."/>
            <person name="Stupka E."/>
            <person name="Sugiura K."/>
            <person name="Sultana R."/>
            <person name="Takenaka Y."/>
            <person name="Taki K."/>
            <person name="Tammoja K."/>
            <person name="Tan S.L."/>
            <person name="Tang S."/>
            <person name="Taylor M.S."/>
            <person name="Tegner J."/>
            <person name="Teichmann S.A."/>
            <person name="Ueda H.R."/>
            <person name="van Nimwegen E."/>
            <person name="Verardo R."/>
            <person name="Wei C.L."/>
            <person name="Yagi K."/>
            <person name="Yamanishi H."/>
            <person name="Zabarovsky E."/>
            <person name="Zhu S."/>
            <person name="Zimmer A."/>
            <person name="Hide W."/>
            <person name="Bult C."/>
            <person name="Grimmond S.M."/>
            <person name="Teasdale R.D."/>
            <person name="Liu E.T."/>
            <person name="Brusic V."/>
            <person name="Quackenbush J."/>
            <person name="Wahlestedt C."/>
            <person name="Mattick J.S."/>
            <person name="Hume D.A."/>
            <person name="Kai C."/>
            <person name="Sasaki D."/>
            <person name="Tomaru Y."/>
            <person name="Fukuda S."/>
            <person name="Kanamori-Katayama M."/>
            <person name="Suzuki M."/>
            <person name="Aoki J."/>
            <person name="Arakawa T."/>
            <person name="Iida J."/>
            <person name="Imamura K."/>
            <person name="Itoh M."/>
            <person name="Kato T."/>
            <person name="Kawaji H."/>
            <person name="Kawagashira N."/>
            <person name="Kawashima T."/>
            <person name="Kojima M."/>
            <person name="Kondo S."/>
            <person name="Konno H."/>
            <person name="Nakano K."/>
            <person name="Ninomiya N."/>
            <person name="Nishio T."/>
            <person name="Okada M."/>
            <person name="Plessy C."/>
            <person name="Shibata K."/>
            <person name="Shiraki T."/>
            <person name="Suzuki S."/>
            <person name="Tagami M."/>
            <person name="Waki K."/>
            <person name="Watahiki A."/>
            <person name="Okamura-Oho Y."/>
            <person name="Suzuki H."/>
            <person name="Kawai J."/>
            <person name="Hayashizaki Y."/>
        </authorList>
    </citation>
    <scope>NUCLEOTIDE SEQUENCE [LARGE SCALE MRNA]</scope>
    <source>
        <strain>NOD</strain>
        <tissue>Thymus</tissue>
    </source>
</reference>
<reference key="3">
    <citation type="journal article" date="2009" name="PLoS Biol.">
        <title>Lineage-specific biology revealed by a finished genome assembly of the mouse.</title>
        <authorList>
            <person name="Church D.M."/>
            <person name="Goodstadt L."/>
            <person name="Hillier L.W."/>
            <person name="Zody M.C."/>
            <person name="Goldstein S."/>
            <person name="She X."/>
            <person name="Bult C.J."/>
            <person name="Agarwala R."/>
            <person name="Cherry J.L."/>
            <person name="DiCuccio M."/>
            <person name="Hlavina W."/>
            <person name="Kapustin Y."/>
            <person name="Meric P."/>
            <person name="Maglott D."/>
            <person name="Birtle Z."/>
            <person name="Marques A.C."/>
            <person name="Graves T."/>
            <person name="Zhou S."/>
            <person name="Teague B."/>
            <person name="Potamousis K."/>
            <person name="Churas C."/>
            <person name="Place M."/>
            <person name="Herschleb J."/>
            <person name="Runnheim R."/>
            <person name="Forrest D."/>
            <person name="Amos-Landgraf J."/>
            <person name="Schwartz D.C."/>
            <person name="Cheng Z."/>
            <person name="Lindblad-Toh K."/>
            <person name="Eichler E.E."/>
            <person name="Ponting C.P."/>
        </authorList>
    </citation>
    <scope>NUCLEOTIDE SEQUENCE [LARGE SCALE GENOMIC DNA]</scope>
    <source>
        <strain>C57BL/6J</strain>
    </source>
</reference>
<reference key="4">
    <citation type="journal article" date="2004" name="Genome Res.">
        <title>The status, quality, and expansion of the NIH full-length cDNA project: the Mammalian Gene Collection (MGC).</title>
        <authorList>
            <consortium name="The MGC Project Team"/>
        </authorList>
    </citation>
    <scope>NUCLEOTIDE SEQUENCE [LARGE SCALE MRNA]</scope>
    <source>
        <tissue>Testis</tissue>
    </source>
</reference>
<reference key="5">
    <citation type="submission" date="2009-01" db="UniProtKB">
        <authorList>
            <person name="Lubec G."/>
            <person name="Sunyer B."/>
            <person name="Chen W.-Q."/>
        </authorList>
    </citation>
    <scope>PROTEIN SEQUENCE OF 175-180</scope>
    <scope>IDENTIFICATION BY MASS SPECTROMETRY</scope>
    <source>
        <strain>OF1</strain>
        <tissue>Hippocampus</tissue>
    </source>
</reference>
<reference key="6">
    <citation type="journal article" date="2009" name="Mol. Cell. Proteomics">
        <title>Large scale localization of protein phosphorylation by use of electron capture dissociation mass spectrometry.</title>
        <authorList>
            <person name="Sweet S.M."/>
            <person name="Bailey C.M."/>
            <person name="Cunningham D.L."/>
            <person name="Heath J.K."/>
            <person name="Cooper H.J."/>
        </authorList>
    </citation>
    <scope>PHOSPHORYLATION [LARGE SCALE ANALYSIS] AT SER-10</scope>
    <scope>IDENTIFICATION BY MASS SPECTROMETRY [LARGE SCALE ANALYSIS]</scope>
    <source>
        <tissue>Embryonic fibroblast</tissue>
    </source>
</reference>
<reference key="7">
    <citation type="journal article" date="2010" name="Cell">
        <title>A tissue-specific atlas of mouse protein phosphorylation and expression.</title>
        <authorList>
            <person name="Huttlin E.L."/>
            <person name="Jedrychowski M.P."/>
            <person name="Elias J.E."/>
            <person name="Goswami T."/>
            <person name="Rad R."/>
            <person name="Beausoleil S.A."/>
            <person name="Villen J."/>
            <person name="Haas W."/>
            <person name="Sowa M.E."/>
            <person name="Gygi S.P."/>
        </authorList>
    </citation>
    <scope>IDENTIFICATION BY MASS SPECTROMETRY [LARGE SCALE ANALYSIS]</scope>
    <source>
        <tissue>Brain</tissue>
        <tissue>Brown adipose tissue</tissue>
        <tissue>Heart</tissue>
        <tissue>Kidney</tissue>
        <tissue>Liver</tissue>
        <tissue>Lung</tissue>
        <tissue>Pancreas</tissue>
        <tissue>Spleen</tissue>
        <tissue>Testis</tissue>
    </source>
</reference>
<reference key="8">
    <citation type="journal article" date="2010" name="Mol. Cell">
        <title>Multiple mRNA decapping enzymes in mammalian cells.</title>
        <authorList>
            <person name="Song M.G."/>
            <person name="Li Y."/>
            <person name="Kiledjian M."/>
        </authorList>
    </citation>
    <scope>ABSENCE OF FUNCTION AS U8 SNORNA DECAPPING ENZYME</scope>
    <scope>RNA-BINDING</scope>
</reference>
<sequence length="218" mass="23984">METRESTESSPGKHLVTSEELISEGKWVKFEKTTYMDPTGKTRTWETVKLTTRKGKSADAVSVIPVLQRTLHHECVILVKQFRPPMGSYCLEFPAGFIEDGESPEAAALRELEEETGYKGEVAECSPAVCMDPGLSNCTTHVVTVTINGDDAGNVRPKPKPGDGEFMEVISLPKNDLLTRLDALGAEQHLTVDAKVYAYGLALKHANSKPFEVPFLKF</sequence>
<feature type="chain" id="PRO_0000057049" description="ADP-sugar pyrophosphatase">
    <location>
        <begin position="1"/>
        <end position="218"/>
    </location>
</feature>
<feature type="domain" description="Nudix hydrolase" evidence="3">
    <location>
        <begin position="56"/>
        <end position="196"/>
    </location>
</feature>
<feature type="short sequence motif" description="Nudix box">
    <location>
        <begin position="96"/>
        <end position="117"/>
    </location>
</feature>
<feature type="binding site" description="in other chain" evidence="2">
    <location>
        <position position="27"/>
    </location>
    <ligand>
        <name>substrate</name>
        <note>ligand shared between dimeric partners</note>
    </ligand>
</feature>
<feature type="binding site">
    <location>
        <begin position="45"/>
        <end position="46"/>
    </location>
    <ligand>
        <name>substrate</name>
        <note>ligand shared between dimeric partners</note>
    </ligand>
</feature>
<feature type="binding site" description="in other chain" evidence="2">
    <location>
        <position position="83"/>
    </location>
    <ligand>
        <name>substrate</name>
        <note>ligand shared between dimeric partners</note>
    </ligand>
</feature>
<feature type="binding site" evidence="2">
    <location>
        <position position="95"/>
    </location>
    <ligand>
        <name>Mg(2+)</name>
        <dbReference type="ChEBI" id="CHEBI:18420"/>
        <label>1</label>
    </ligand>
</feature>
<feature type="binding site" description="in other chain" evidence="1">
    <location>
        <position position="97"/>
    </location>
    <ligand>
        <name>substrate</name>
        <note>ligand shared between dimeric partners</note>
    </ligand>
</feature>
<feature type="binding site" evidence="2">
    <location>
        <position position="111"/>
    </location>
    <ligand>
        <name>Mg(2+)</name>
        <dbReference type="ChEBI" id="CHEBI:18420"/>
        <label>2</label>
    </ligand>
</feature>
<feature type="binding site" evidence="2">
    <location>
        <position position="111"/>
    </location>
    <ligand>
        <name>Mg(2+)</name>
        <dbReference type="ChEBI" id="CHEBI:18420"/>
        <label>3</label>
    </ligand>
</feature>
<feature type="binding site" evidence="2">
    <location>
        <position position="115"/>
    </location>
    <ligand>
        <name>Mg(2+)</name>
        <dbReference type="ChEBI" id="CHEBI:18420"/>
        <label>1</label>
    </ligand>
</feature>
<feature type="binding site" evidence="2">
    <location>
        <position position="115"/>
    </location>
    <ligand>
        <name>Mg(2+)</name>
        <dbReference type="ChEBI" id="CHEBI:18420"/>
        <label>3</label>
    </ligand>
</feature>
<feature type="binding site" description="in other chain" evidence="2">
    <location>
        <position position="132"/>
    </location>
    <ligand>
        <name>substrate</name>
        <note>ligand shared between dimeric partners</note>
    </ligand>
</feature>
<feature type="binding site" evidence="2">
    <location>
        <position position="165"/>
    </location>
    <ligand>
        <name>Mg(2+)</name>
        <dbReference type="ChEBI" id="CHEBI:18420"/>
        <label>3</label>
    </ligand>
</feature>
<feature type="modified residue" description="N-acetylmethionine" evidence="2">
    <location>
        <position position="1"/>
    </location>
</feature>
<feature type="modified residue" description="Phosphoserine" evidence="8">
    <location>
        <position position="10"/>
    </location>
</feature>
<feature type="modified residue" description="Phosphothreonine" evidence="2">
    <location>
        <position position="44"/>
    </location>
</feature>
<feature type="modified residue" description="N6-acetyllysine" evidence="2">
    <location>
        <position position="209"/>
    </location>
</feature>
<feature type="modified residue" description="N6-acetyllysine" evidence="2">
    <location>
        <position position="217"/>
    </location>
</feature>
<feature type="cross-link" description="Glycyl lysine isopeptide (Lys-Gly) (interchain with G-Cter in SUMO2)" evidence="2">
    <location>
        <position position="41"/>
    </location>
</feature>
<feature type="sequence conflict" description="In Ref. 4; AAH04571." evidence="6" ref="4">
    <original>S</original>
    <variation>N</variation>
    <location>
        <position position="103"/>
    </location>
</feature>
<accession>Q9JKX6</accession>
<accession>A2ATT6</accession>
<accession>Q99KM4</accession>
<proteinExistence type="evidence at protein level"/>
<comment type="function">
    <text evidence="2 4 5">Enzyme that can either act as an ADP-sugar pyrophosphatase in absence of diphosphate or catalyze the synthesis of ATP in presence of diphosphate (By similarity). In absence of diphosphate, hydrolyzes with similar activities various modified nucleoside diphosphates such as ADP-ribose, ADP-mannose, ADP-glucose, 8-oxo-GDP and 8-oxo-dGDP (PubMed:10722730). Can also hydrolyze other nucleotide sugars with low activity (PubMed:10722730). In presence of diphosphate, mediates the synthesis of ATP in the nucleus by catalyzing the conversion of ADP-ribose to ATP and ribose 5-phosphate (By similarity). Nuclear ATP synthesis takes place when dephosphorylated at Thr-44 (By similarity). Nuclear ATP generation is required for extensive chromatin remodeling events that are energy-consuming (By similarity). Does not play a role in U8 snoRNA decapping activity (PubMed:21070968). Binds U8 snoRNA (PubMed:21070968).</text>
</comment>
<comment type="catalytic activity">
    <reaction evidence="2">
        <text>D-ribose 5-phosphate + ATP + H(+) = ADP-D-ribose + diphosphate</text>
        <dbReference type="Rhea" id="RHEA:50248"/>
        <dbReference type="ChEBI" id="CHEBI:15378"/>
        <dbReference type="ChEBI" id="CHEBI:30616"/>
        <dbReference type="ChEBI" id="CHEBI:33019"/>
        <dbReference type="ChEBI" id="CHEBI:57967"/>
        <dbReference type="ChEBI" id="CHEBI:78346"/>
        <dbReference type="EC" id="2.7.7.96"/>
    </reaction>
</comment>
<comment type="catalytic activity">
    <reaction evidence="2">
        <text>ADP-D-ribose + H2O = D-ribose 5-phosphate + AMP + 2 H(+)</text>
        <dbReference type="Rhea" id="RHEA:10412"/>
        <dbReference type="ChEBI" id="CHEBI:15377"/>
        <dbReference type="ChEBI" id="CHEBI:15378"/>
        <dbReference type="ChEBI" id="CHEBI:57967"/>
        <dbReference type="ChEBI" id="CHEBI:78346"/>
        <dbReference type="ChEBI" id="CHEBI:456215"/>
        <dbReference type="EC" id="3.6.1.13"/>
    </reaction>
</comment>
<comment type="catalytic activity">
    <reaction evidence="2">
        <text>8-oxo-dGDP + H2O = 8-oxo-dGMP + phosphate + H(+)</text>
        <dbReference type="Rhea" id="RHEA:32063"/>
        <dbReference type="ChEBI" id="CHEBI:15377"/>
        <dbReference type="ChEBI" id="CHEBI:15378"/>
        <dbReference type="ChEBI" id="CHEBI:43474"/>
        <dbReference type="ChEBI" id="CHEBI:63224"/>
        <dbReference type="ChEBI" id="CHEBI:63715"/>
        <dbReference type="EC" id="3.6.1.58"/>
    </reaction>
</comment>
<comment type="cofactor">
    <cofactor evidence="2">
        <name>Mg(2+)</name>
        <dbReference type="ChEBI" id="CHEBI:18420"/>
    </cofactor>
    <text evidence="2">Binds 3 Mg(2+) ions per subunit.</text>
</comment>
<comment type="subunit">
    <text evidence="2">Homodimer. Interacts with PARG.</text>
</comment>
<comment type="subcellular location">
    <subcellularLocation>
        <location evidence="2">Nucleus</location>
    </subcellularLocation>
</comment>
<comment type="tissue specificity">
    <text evidence="4">Widely expressed. Most abundant in liver.</text>
</comment>
<comment type="PTM">
    <text evidence="2">Phosphorylation at Thr-44 is required for homodimer stability; dephosphorylation results in destabilization of the homodimer. Dephosphorylation at Thr-44 promotes the ATP-synthesis activity.</text>
</comment>
<comment type="similarity">
    <text evidence="6">Belongs to the Nudix hydrolase family.</text>
</comment>
<evidence type="ECO:0000250" key="1"/>
<evidence type="ECO:0000250" key="2">
    <source>
        <dbReference type="UniProtKB" id="Q9UKK9"/>
    </source>
</evidence>
<evidence type="ECO:0000255" key="3">
    <source>
        <dbReference type="PROSITE-ProRule" id="PRU00794"/>
    </source>
</evidence>
<evidence type="ECO:0000269" key="4">
    <source>
    </source>
</evidence>
<evidence type="ECO:0000269" key="5">
    <source>
    </source>
</evidence>
<evidence type="ECO:0000305" key="6"/>
<evidence type="ECO:0000312" key="7">
    <source>
        <dbReference type="MGI" id="MGI:1858232"/>
    </source>
</evidence>
<evidence type="ECO:0007744" key="8">
    <source>
    </source>
</evidence>
<gene>
    <name evidence="7" type="primary">Nudt5</name>
</gene>
<organism>
    <name type="scientific">Mus musculus</name>
    <name type="common">Mouse</name>
    <dbReference type="NCBI Taxonomy" id="10090"/>
    <lineage>
        <taxon>Eukaryota</taxon>
        <taxon>Metazoa</taxon>
        <taxon>Chordata</taxon>
        <taxon>Craniata</taxon>
        <taxon>Vertebrata</taxon>
        <taxon>Euteleostomi</taxon>
        <taxon>Mammalia</taxon>
        <taxon>Eutheria</taxon>
        <taxon>Euarchontoglires</taxon>
        <taxon>Glires</taxon>
        <taxon>Rodentia</taxon>
        <taxon>Myomorpha</taxon>
        <taxon>Muroidea</taxon>
        <taxon>Muridae</taxon>
        <taxon>Murinae</taxon>
        <taxon>Mus</taxon>
        <taxon>Mus</taxon>
    </lineage>
</organism>
<dbReference type="EC" id="3.6.1.13" evidence="2"/>
<dbReference type="EC" id="3.6.1.58" evidence="2"/>
<dbReference type="EC" id="2.7.7.96" evidence="2"/>
<dbReference type="EMBL" id="AF222786">
    <property type="protein sequence ID" value="AAF44630.1"/>
    <property type="molecule type" value="mRNA"/>
</dbReference>
<dbReference type="EMBL" id="AK088222">
    <property type="protein sequence ID" value="BAC40220.1"/>
    <property type="molecule type" value="mRNA"/>
</dbReference>
<dbReference type="EMBL" id="AL928924">
    <property type="status" value="NOT_ANNOTATED_CDS"/>
    <property type="molecule type" value="Genomic_DNA"/>
</dbReference>
<dbReference type="EMBL" id="BC004571">
    <property type="protein sequence ID" value="AAH04571.1"/>
    <property type="molecule type" value="mRNA"/>
</dbReference>
<dbReference type="EMBL" id="BC049595">
    <property type="protein sequence ID" value="AAH49595.1"/>
    <property type="molecule type" value="mRNA"/>
</dbReference>
<dbReference type="CCDS" id="CCDS15667.1"/>
<dbReference type="RefSeq" id="NP_058614.1">
    <property type="nucleotide sequence ID" value="NM_016918.4"/>
</dbReference>
<dbReference type="RefSeq" id="XP_006497575.1">
    <property type="nucleotide sequence ID" value="XM_006497512.3"/>
</dbReference>
<dbReference type="RefSeq" id="XP_006497576.1">
    <property type="nucleotide sequence ID" value="XM_006497513.3"/>
</dbReference>
<dbReference type="RefSeq" id="XP_036018287.1">
    <property type="nucleotide sequence ID" value="XM_036162394.1"/>
</dbReference>
<dbReference type="RefSeq" id="XP_036018288.1">
    <property type="nucleotide sequence ID" value="XM_036162395.1"/>
</dbReference>
<dbReference type="SMR" id="Q9JKX6"/>
<dbReference type="BioGRID" id="207516">
    <property type="interactions" value="7"/>
</dbReference>
<dbReference type="FunCoup" id="Q9JKX6">
    <property type="interactions" value="2289"/>
</dbReference>
<dbReference type="IntAct" id="Q9JKX6">
    <property type="interactions" value="1"/>
</dbReference>
<dbReference type="STRING" id="10090.ENSMUSP00000026927"/>
<dbReference type="iPTMnet" id="Q9JKX6"/>
<dbReference type="PhosphoSitePlus" id="Q9JKX6"/>
<dbReference type="SwissPalm" id="Q9JKX6"/>
<dbReference type="REPRODUCTION-2DPAGE" id="Q9JKX6"/>
<dbReference type="jPOST" id="Q9JKX6"/>
<dbReference type="PaxDb" id="10090-ENSMUSP00000026927"/>
<dbReference type="PeptideAtlas" id="Q9JKX6"/>
<dbReference type="ProteomicsDB" id="289950"/>
<dbReference type="Pumba" id="Q9JKX6"/>
<dbReference type="Antibodypedia" id="11248">
    <property type="antibodies" value="118 antibodies from 26 providers"/>
</dbReference>
<dbReference type="DNASU" id="53893"/>
<dbReference type="Ensembl" id="ENSMUST00000026927.10">
    <property type="protein sequence ID" value="ENSMUSP00000026927.4"/>
    <property type="gene ID" value="ENSMUSG00000025817.14"/>
</dbReference>
<dbReference type="GeneID" id="53893"/>
<dbReference type="KEGG" id="mmu:53893"/>
<dbReference type="UCSC" id="uc033hlj.1">
    <property type="organism name" value="mouse"/>
</dbReference>
<dbReference type="AGR" id="MGI:1858232"/>
<dbReference type="CTD" id="11164"/>
<dbReference type="MGI" id="MGI:1858232">
    <property type="gene designation" value="Nudt5"/>
</dbReference>
<dbReference type="VEuPathDB" id="HostDB:ENSMUSG00000025817"/>
<dbReference type="eggNOG" id="KOG3041">
    <property type="taxonomic scope" value="Eukaryota"/>
</dbReference>
<dbReference type="GeneTree" id="ENSGT00940000154045"/>
<dbReference type="InParanoid" id="Q9JKX6"/>
<dbReference type="OMA" id="NDPGLCN"/>
<dbReference type="OrthoDB" id="10249920at2759"/>
<dbReference type="PhylomeDB" id="Q9JKX6"/>
<dbReference type="TreeFam" id="TF106347"/>
<dbReference type="Reactome" id="R-MMU-2393930">
    <property type="pathway name" value="Phosphate bond hydrolysis by NUDT proteins"/>
</dbReference>
<dbReference type="SABIO-RK" id="Q9JKX6"/>
<dbReference type="BioGRID-ORCS" id="53893">
    <property type="hits" value="2 hits in 75 CRISPR screens"/>
</dbReference>
<dbReference type="ChiTaRS" id="Nudt5">
    <property type="organism name" value="mouse"/>
</dbReference>
<dbReference type="PRO" id="PR:Q9JKX6"/>
<dbReference type="Proteomes" id="UP000000589">
    <property type="component" value="Chromosome 2"/>
</dbReference>
<dbReference type="RNAct" id="Q9JKX6">
    <property type="molecule type" value="protein"/>
</dbReference>
<dbReference type="Bgee" id="ENSMUSG00000025817">
    <property type="expression patterns" value="Expressed in metanephric loop of Henle and 264 other cell types or tissues"/>
</dbReference>
<dbReference type="ExpressionAtlas" id="Q9JKX6">
    <property type="expression patterns" value="baseline and differential"/>
</dbReference>
<dbReference type="GO" id="GO:0005634">
    <property type="term" value="C:nucleus"/>
    <property type="evidence" value="ECO:0000250"/>
    <property type="project" value="UniProtKB"/>
</dbReference>
<dbReference type="GO" id="GO:0044715">
    <property type="term" value="F:8-oxo-dGDP phosphatase activity"/>
    <property type="evidence" value="ECO:0000250"/>
    <property type="project" value="UniProtKB"/>
</dbReference>
<dbReference type="GO" id="GO:0047631">
    <property type="term" value="F:ADP-ribose diphosphatase activity"/>
    <property type="evidence" value="ECO:0000250"/>
    <property type="project" value="UniProtKB"/>
</dbReference>
<dbReference type="GO" id="GO:0019144">
    <property type="term" value="F:ADP-sugar diphosphatase activity"/>
    <property type="evidence" value="ECO:0000250"/>
    <property type="project" value="UniProtKB"/>
</dbReference>
<dbReference type="GO" id="GO:0000287">
    <property type="term" value="F:magnesium ion binding"/>
    <property type="evidence" value="ECO:0000250"/>
    <property type="project" value="UniProtKB"/>
</dbReference>
<dbReference type="GO" id="GO:0017110">
    <property type="term" value="F:nucleoside diphosphate phosphatase activity"/>
    <property type="evidence" value="ECO:0000314"/>
    <property type="project" value="MGI"/>
</dbReference>
<dbReference type="GO" id="GO:0016779">
    <property type="term" value="F:nucleotidyltransferase activity"/>
    <property type="evidence" value="ECO:0000250"/>
    <property type="project" value="UniProtKB"/>
</dbReference>
<dbReference type="GO" id="GO:0042803">
    <property type="term" value="F:protein homodimerization activity"/>
    <property type="evidence" value="ECO:0000250"/>
    <property type="project" value="UniProtKB"/>
</dbReference>
<dbReference type="GO" id="GO:0030515">
    <property type="term" value="F:snoRNA binding"/>
    <property type="evidence" value="ECO:0000314"/>
    <property type="project" value="UniProtKB"/>
</dbReference>
<dbReference type="GO" id="GO:1990966">
    <property type="term" value="P:ATP generation from poly-ADP-D-ribose"/>
    <property type="evidence" value="ECO:0007669"/>
    <property type="project" value="Ensembl"/>
</dbReference>
<dbReference type="GO" id="GO:0006338">
    <property type="term" value="P:chromatin remodeling"/>
    <property type="evidence" value="ECO:0000250"/>
    <property type="project" value="UniProtKB"/>
</dbReference>
<dbReference type="GO" id="GO:0019303">
    <property type="term" value="P:D-ribose catabolic process"/>
    <property type="evidence" value="ECO:0000250"/>
    <property type="project" value="UniProtKB"/>
</dbReference>
<dbReference type="GO" id="GO:0006139">
    <property type="term" value="P:nucleobase-containing compound metabolic process"/>
    <property type="evidence" value="ECO:0000314"/>
    <property type="project" value="MGI"/>
</dbReference>
<dbReference type="GO" id="GO:0009191">
    <property type="term" value="P:ribonucleoside diphosphate catabolic process"/>
    <property type="evidence" value="ECO:0000250"/>
    <property type="project" value="UniProtKB"/>
</dbReference>
<dbReference type="CDD" id="cd18888">
    <property type="entry name" value="NUDIX_ADPRase_Nudt5"/>
    <property type="match status" value="1"/>
</dbReference>
<dbReference type="FunFam" id="3.90.79.10:FF:000016">
    <property type="entry name" value="ADP-sugar pyrophosphatase isoform X1"/>
    <property type="match status" value="1"/>
</dbReference>
<dbReference type="Gene3D" id="3.90.79.10">
    <property type="entry name" value="Nucleoside Triphosphate Pyrophosphohydrolase"/>
    <property type="match status" value="1"/>
</dbReference>
<dbReference type="InterPro" id="IPR020476">
    <property type="entry name" value="Nudix_hydrolase"/>
</dbReference>
<dbReference type="InterPro" id="IPR015797">
    <property type="entry name" value="NUDIX_hydrolase-like_dom_sf"/>
</dbReference>
<dbReference type="InterPro" id="IPR020084">
    <property type="entry name" value="NUDIX_hydrolase_CS"/>
</dbReference>
<dbReference type="InterPro" id="IPR000086">
    <property type="entry name" value="NUDIX_hydrolase_dom"/>
</dbReference>
<dbReference type="PANTHER" id="PTHR11839:SF1">
    <property type="entry name" value="ADP-SUGAR PYROPHOSPHATASE"/>
    <property type="match status" value="1"/>
</dbReference>
<dbReference type="PANTHER" id="PTHR11839">
    <property type="entry name" value="UDP/ADP-SUGAR PYROPHOSPHATASE"/>
    <property type="match status" value="1"/>
</dbReference>
<dbReference type="Pfam" id="PF00293">
    <property type="entry name" value="NUDIX"/>
    <property type="match status" value="1"/>
</dbReference>
<dbReference type="PRINTS" id="PR00502">
    <property type="entry name" value="NUDIXFAMILY"/>
</dbReference>
<dbReference type="SUPFAM" id="SSF55811">
    <property type="entry name" value="Nudix"/>
    <property type="match status" value="1"/>
</dbReference>
<dbReference type="PROSITE" id="PS51462">
    <property type="entry name" value="NUDIX"/>
    <property type="match status" value="1"/>
</dbReference>
<dbReference type="PROSITE" id="PS00893">
    <property type="entry name" value="NUDIX_BOX"/>
    <property type="match status" value="1"/>
</dbReference>
<protein>
    <recommendedName>
        <fullName evidence="2">ADP-sugar pyrophosphatase</fullName>
        <ecNumber evidence="2">3.6.1.13</ecNumber>
    </recommendedName>
    <alternativeName>
        <fullName evidence="2">8-oxo-dGDP phosphatase</fullName>
        <ecNumber evidence="2">3.6.1.58</ecNumber>
    </alternativeName>
    <alternativeName>
        <fullName evidence="2">Nuclear ATP-synthesis protein NUDIX5</fullName>
        <ecNumber evidence="2">2.7.7.96</ecNumber>
    </alternativeName>
    <alternativeName>
        <fullName evidence="6">Nucleoside diphosphate-linked moiety X motif 5</fullName>
        <shortName evidence="6">Nudix motif 5</shortName>
    </alternativeName>
</protein>
<keyword id="KW-0007">Acetylation</keyword>
<keyword id="KW-0903">Direct protein sequencing</keyword>
<keyword id="KW-0378">Hydrolase</keyword>
<keyword id="KW-1017">Isopeptide bond</keyword>
<keyword id="KW-0460">Magnesium</keyword>
<keyword id="KW-0479">Metal-binding</keyword>
<keyword id="KW-0539">Nucleus</keyword>
<keyword id="KW-0597">Phosphoprotein</keyword>
<keyword id="KW-1185">Reference proteome</keyword>
<keyword id="KW-0694">RNA-binding</keyword>
<keyword id="KW-0808">Transferase</keyword>
<keyword id="KW-0832">Ubl conjugation</keyword>
<name>NUDT5_MOUSE</name>